<organism>
    <name type="scientific">Pseudomonas putida (strain GB-1)</name>
    <dbReference type="NCBI Taxonomy" id="76869"/>
    <lineage>
        <taxon>Bacteria</taxon>
        <taxon>Pseudomonadati</taxon>
        <taxon>Pseudomonadota</taxon>
        <taxon>Gammaproteobacteria</taxon>
        <taxon>Pseudomonadales</taxon>
        <taxon>Pseudomonadaceae</taxon>
        <taxon>Pseudomonas</taxon>
    </lineage>
</organism>
<accession>B0KUD8</accession>
<evidence type="ECO:0000255" key="1">
    <source>
        <dbReference type="HAMAP-Rule" id="MF_00098"/>
    </source>
</evidence>
<reference key="1">
    <citation type="submission" date="2008-01" db="EMBL/GenBank/DDBJ databases">
        <title>Complete sequence of Pseudomonas putida GB-1.</title>
        <authorList>
            <consortium name="US DOE Joint Genome Institute"/>
            <person name="Copeland A."/>
            <person name="Lucas S."/>
            <person name="Lapidus A."/>
            <person name="Barry K."/>
            <person name="Glavina del Rio T."/>
            <person name="Dalin E."/>
            <person name="Tice H."/>
            <person name="Pitluck S."/>
            <person name="Bruce D."/>
            <person name="Goodwin L."/>
            <person name="Chertkov O."/>
            <person name="Brettin T."/>
            <person name="Detter J.C."/>
            <person name="Han C."/>
            <person name="Kuske C.R."/>
            <person name="Schmutz J."/>
            <person name="Larimer F."/>
            <person name="Land M."/>
            <person name="Hauser L."/>
            <person name="Kyrpides N."/>
            <person name="Kim E."/>
            <person name="McCarthy J.K."/>
            <person name="Richardson P."/>
        </authorList>
    </citation>
    <scope>NUCLEOTIDE SEQUENCE [LARGE SCALE GENOMIC DNA]</scope>
    <source>
        <strain>GB-1</strain>
    </source>
</reference>
<name>SYM_PSEPG</name>
<dbReference type="EC" id="6.1.1.10" evidence="1"/>
<dbReference type="EMBL" id="CP000926">
    <property type="protein sequence ID" value="ABZ00204.1"/>
    <property type="molecule type" value="Genomic_DNA"/>
</dbReference>
<dbReference type="RefSeq" id="WP_012273871.1">
    <property type="nucleotide sequence ID" value="NC_010322.1"/>
</dbReference>
<dbReference type="SMR" id="B0KUD8"/>
<dbReference type="KEGG" id="ppg:PputGB1_4315"/>
<dbReference type="eggNOG" id="COG0073">
    <property type="taxonomic scope" value="Bacteria"/>
</dbReference>
<dbReference type="eggNOG" id="COG0143">
    <property type="taxonomic scope" value="Bacteria"/>
</dbReference>
<dbReference type="HOGENOM" id="CLU_009710_7_0_6"/>
<dbReference type="Proteomes" id="UP000002157">
    <property type="component" value="Chromosome"/>
</dbReference>
<dbReference type="GO" id="GO:0005829">
    <property type="term" value="C:cytosol"/>
    <property type="evidence" value="ECO:0007669"/>
    <property type="project" value="TreeGrafter"/>
</dbReference>
<dbReference type="GO" id="GO:0005524">
    <property type="term" value="F:ATP binding"/>
    <property type="evidence" value="ECO:0007669"/>
    <property type="project" value="UniProtKB-UniRule"/>
</dbReference>
<dbReference type="GO" id="GO:0046872">
    <property type="term" value="F:metal ion binding"/>
    <property type="evidence" value="ECO:0007669"/>
    <property type="project" value="UniProtKB-KW"/>
</dbReference>
<dbReference type="GO" id="GO:0004825">
    <property type="term" value="F:methionine-tRNA ligase activity"/>
    <property type="evidence" value="ECO:0007669"/>
    <property type="project" value="UniProtKB-UniRule"/>
</dbReference>
<dbReference type="GO" id="GO:0000049">
    <property type="term" value="F:tRNA binding"/>
    <property type="evidence" value="ECO:0007669"/>
    <property type="project" value="UniProtKB-KW"/>
</dbReference>
<dbReference type="GO" id="GO:0006431">
    <property type="term" value="P:methionyl-tRNA aminoacylation"/>
    <property type="evidence" value="ECO:0007669"/>
    <property type="project" value="UniProtKB-UniRule"/>
</dbReference>
<dbReference type="CDD" id="cd07957">
    <property type="entry name" value="Anticodon_Ia_Met"/>
    <property type="match status" value="1"/>
</dbReference>
<dbReference type="CDD" id="cd00814">
    <property type="entry name" value="MetRS_core"/>
    <property type="match status" value="1"/>
</dbReference>
<dbReference type="CDD" id="cd02800">
    <property type="entry name" value="tRNA_bind_EcMetRS_like"/>
    <property type="match status" value="1"/>
</dbReference>
<dbReference type="FunFam" id="1.10.730.10:FF:000005">
    <property type="entry name" value="Methionine--tRNA ligase"/>
    <property type="match status" value="1"/>
</dbReference>
<dbReference type="FunFam" id="2.20.28.20:FF:000001">
    <property type="entry name" value="Methionine--tRNA ligase"/>
    <property type="match status" value="1"/>
</dbReference>
<dbReference type="FunFam" id="2.40.50.140:FF:000042">
    <property type="entry name" value="Methionine--tRNA ligase"/>
    <property type="match status" value="1"/>
</dbReference>
<dbReference type="Gene3D" id="3.40.50.620">
    <property type="entry name" value="HUPs"/>
    <property type="match status" value="1"/>
</dbReference>
<dbReference type="Gene3D" id="1.10.730.10">
    <property type="entry name" value="Isoleucyl-tRNA Synthetase, Domain 1"/>
    <property type="match status" value="1"/>
</dbReference>
<dbReference type="Gene3D" id="2.20.28.20">
    <property type="entry name" value="Methionyl-tRNA synthetase, Zn-domain"/>
    <property type="match status" value="1"/>
</dbReference>
<dbReference type="Gene3D" id="2.40.50.140">
    <property type="entry name" value="Nucleic acid-binding proteins"/>
    <property type="match status" value="1"/>
</dbReference>
<dbReference type="HAMAP" id="MF_00098">
    <property type="entry name" value="Met_tRNA_synth_type1"/>
    <property type="match status" value="1"/>
</dbReference>
<dbReference type="InterPro" id="IPR001412">
    <property type="entry name" value="aa-tRNA-synth_I_CS"/>
</dbReference>
<dbReference type="InterPro" id="IPR041872">
    <property type="entry name" value="Anticodon_Met"/>
</dbReference>
<dbReference type="InterPro" id="IPR004495">
    <property type="entry name" value="Met-tRNA-synth_bsu_C"/>
</dbReference>
<dbReference type="InterPro" id="IPR023458">
    <property type="entry name" value="Met-tRNA_ligase_1"/>
</dbReference>
<dbReference type="InterPro" id="IPR014758">
    <property type="entry name" value="Met-tRNA_synth"/>
</dbReference>
<dbReference type="InterPro" id="IPR015413">
    <property type="entry name" value="Methionyl/Leucyl_tRNA_Synth"/>
</dbReference>
<dbReference type="InterPro" id="IPR033911">
    <property type="entry name" value="MetRS_core"/>
</dbReference>
<dbReference type="InterPro" id="IPR029038">
    <property type="entry name" value="MetRS_Zn"/>
</dbReference>
<dbReference type="InterPro" id="IPR012340">
    <property type="entry name" value="NA-bd_OB-fold"/>
</dbReference>
<dbReference type="InterPro" id="IPR014729">
    <property type="entry name" value="Rossmann-like_a/b/a_fold"/>
</dbReference>
<dbReference type="InterPro" id="IPR002547">
    <property type="entry name" value="tRNA-bd_dom"/>
</dbReference>
<dbReference type="InterPro" id="IPR009080">
    <property type="entry name" value="tRNAsynth_Ia_anticodon-bd"/>
</dbReference>
<dbReference type="NCBIfam" id="TIGR00398">
    <property type="entry name" value="metG"/>
    <property type="match status" value="1"/>
</dbReference>
<dbReference type="NCBIfam" id="TIGR00399">
    <property type="entry name" value="metG_C_term"/>
    <property type="match status" value="1"/>
</dbReference>
<dbReference type="NCBIfam" id="NF001100">
    <property type="entry name" value="PRK00133.1"/>
    <property type="match status" value="1"/>
</dbReference>
<dbReference type="PANTHER" id="PTHR45765">
    <property type="entry name" value="METHIONINE--TRNA LIGASE"/>
    <property type="match status" value="1"/>
</dbReference>
<dbReference type="PANTHER" id="PTHR45765:SF1">
    <property type="entry name" value="METHIONINE--TRNA LIGASE, CYTOPLASMIC"/>
    <property type="match status" value="1"/>
</dbReference>
<dbReference type="Pfam" id="PF19303">
    <property type="entry name" value="Anticodon_3"/>
    <property type="match status" value="1"/>
</dbReference>
<dbReference type="Pfam" id="PF09334">
    <property type="entry name" value="tRNA-synt_1g"/>
    <property type="match status" value="1"/>
</dbReference>
<dbReference type="Pfam" id="PF01588">
    <property type="entry name" value="tRNA_bind"/>
    <property type="match status" value="1"/>
</dbReference>
<dbReference type="PRINTS" id="PR01041">
    <property type="entry name" value="TRNASYNTHMET"/>
</dbReference>
<dbReference type="SUPFAM" id="SSF47323">
    <property type="entry name" value="Anticodon-binding domain of a subclass of class I aminoacyl-tRNA synthetases"/>
    <property type="match status" value="1"/>
</dbReference>
<dbReference type="SUPFAM" id="SSF57770">
    <property type="entry name" value="Methionyl-tRNA synthetase (MetRS), Zn-domain"/>
    <property type="match status" value="1"/>
</dbReference>
<dbReference type="SUPFAM" id="SSF50249">
    <property type="entry name" value="Nucleic acid-binding proteins"/>
    <property type="match status" value="1"/>
</dbReference>
<dbReference type="SUPFAM" id="SSF52374">
    <property type="entry name" value="Nucleotidylyl transferase"/>
    <property type="match status" value="1"/>
</dbReference>
<dbReference type="PROSITE" id="PS00178">
    <property type="entry name" value="AA_TRNA_LIGASE_I"/>
    <property type="match status" value="1"/>
</dbReference>
<dbReference type="PROSITE" id="PS50886">
    <property type="entry name" value="TRBD"/>
    <property type="match status" value="1"/>
</dbReference>
<feature type="chain" id="PRO_0000331874" description="Methionine--tRNA ligase">
    <location>
        <begin position="1"/>
        <end position="679"/>
    </location>
</feature>
<feature type="domain" description="tRNA-binding" evidence="1">
    <location>
        <begin position="577"/>
        <end position="679"/>
    </location>
</feature>
<feature type="short sequence motif" description="'HIGH' region">
    <location>
        <begin position="14"/>
        <end position="24"/>
    </location>
</feature>
<feature type="short sequence motif" description="'KMSKS' region">
    <location>
        <begin position="331"/>
        <end position="335"/>
    </location>
</feature>
<feature type="binding site" evidence="1">
    <location>
        <position position="145"/>
    </location>
    <ligand>
        <name>Zn(2+)</name>
        <dbReference type="ChEBI" id="CHEBI:29105"/>
    </ligand>
</feature>
<feature type="binding site" evidence="1">
    <location>
        <position position="148"/>
    </location>
    <ligand>
        <name>Zn(2+)</name>
        <dbReference type="ChEBI" id="CHEBI:29105"/>
    </ligand>
</feature>
<feature type="binding site" evidence="1">
    <location>
        <position position="158"/>
    </location>
    <ligand>
        <name>Zn(2+)</name>
        <dbReference type="ChEBI" id="CHEBI:29105"/>
    </ligand>
</feature>
<feature type="binding site" evidence="1">
    <location>
        <position position="161"/>
    </location>
    <ligand>
        <name>Zn(2+)</name>
        <dbReference type="ChEBI" id="CHEBI:29105"/>
    </ligand>
</feature>
<feature type="binding site" evidence="1">
    <location>
        <position position="334"/>
    </location>
    <ligand>
        <name>ATP</name>
        <dbReference type="ChEBI" id="CHEBI:30616"/>
    </ligand>
</feature>
<comment type="function">
    <text evidence="1">Is required not only for elongation of protein synthesis but also for the initiation of all mRNA translation through initiator tRNA(fMet) aminoacylation.</text>
</comment>
<comment type="catalytic activity">
    <reaction evidence="1">
        <text>tRNA(Met) + L-methionine + ATP = L-methionyl-tRNA(Met) + AMP + diphosphate</text>
        <dbReference type="Rhea" id="RHEA:13481"/>
        <dbReference type="Rhea" id="RHEA-COMP:9667"/>
        <dbReference type="Rhea" id="RHEA-COMP:9698"/>
        <dbReference type="ChEBI" id="CHEBI:30616"/>
        <dbReference type="ChEBI" id="CHEBI:33019"/>
        <dbReference type="ChEBI" id="CHEBI:57844"/>
        <dbReference type="ChEBI" id="CHEBI:78442"/>
        <dbReference type="ChEBI" id="CHEBI:78530"/>
        <dbReference type="ChEBI" id="CHEBI:456215"/>
        <dbReference type="EC" id="6.1.1.10"/>
    </reaction>
</comment>
<comment type="cofactor">
    <cofactor evidence="1">
        <name>Zn(2+)</name>
        <dbReference type="ChEBI" id="CHEBI:29105"/>
    </cofactor>
    <text evidence="1">Binds 1 zinc ion per subunit.</text>
</comment>
<comment type="subunit">
    <text evidence="1">Homodimer.</text>
</comment>
<comment type="subcellular location">
    <subcellularLocation>
        <location evidence="1">Cytoplasm</location>
    </subcellularLocation>
</comment>
<comment type="similarity">
    <text evidence="1">Belongs to the class-I aminoacyl-tRNA synthetase family. MetG type 1 subfamily.</text>
</comment>
<sequence length="679" mass="75288">MSEPRQILVTSALPYANGSIHLGHMLEYIQTDMWVRFQKMRGNQCIYVCADDAHGSAIMLRAEKEGITPEQLIANVQAEHSSDFADFLVDFDNFHSTHSEENRELSSLIYTRLREAGHIATRSVTQYFDPEKGMFLADRFIKGTCPKCAAEDQYGDNCEKCGATYAPTELKNPKSAISGATPVLRDSQHFFFKLPDFQAMLQQWTRSGTLQDAVANKLAEWLDSGLQEWDISRDAPYFGFEIPGEPGKYFYVWLDAPIGYMASFKNLCARRPELDFDAFWNEGSKAELYHFIGKDIVNFHALFWPAMLEGAGFRKPTAVNVHGYLTVNGAKMSKSRGTFIKARTYLDHLQPEYLRYYYAAKLGRGVDDLDLNLEDFVQKVNSDLVGKVVNIASRCAGFIHKGNEGVMVSGDAAPELTEAFLTAAPSIAEAYEARDFGRAMREIMALADRANAWIADKAPWSLAKQEGKQDEVQAICAQGINLFRQLVIFLKPVLPVLAADAEAFLNVAPLTWSDHLSRLENHKLNPFKALMSRIEPAKVEAMVAASKEDLLATQAKAPAGNGELTKDPLSAEIEFDTFAAVDLRVALIVKAEAVAGADKLLQLTLDIGDERRNVFSGIKSAYPDPSKLEGRLTMMVANLKPRKMRFGVSEGMVMAAGPGGEEIYLLSPDSGAKPGQRIK</sequence>
<protein>
    <recommendedName>
        <fullName evidence="1">Methionine--tRNA ligase</fullName>
        <ecNumber evidence="1">6.1.1.10</ecNumber>
    </recommendedName>
    <alternativeName>
        <fullName evidence="1">Methionyl-tRNA synthetase</fullName>
        <shortName evidence="1">MetRS</shortName>
    </alternativeName>
</protein>
<keyword id="KW-0030">Aminoacyl-tRNA synthetase</keyword>
<keyword id="KW-0067">ATP-binding</keyword>
<keyword id="KW-0963">Cytoplasm</keyword>
<keyword id="KW-0436">Ligase</keyword>
<keyword id="KW-0479">Metal-binding</keyword>
<keyword id="KW-0547">Nucleotide-binding</keyword>
<keyword id="KW-0648">Protein biosynthesis</keyword>
<keyword id="KW-0694">RNA-binding</keyword>
<keyword id="KW-0820">tRNA-binding</keyword>
<keyword id="KW-0862">Zinc</keyword>
<gene>
    <name evidence="1" type="primary">metG</name>
    <name type="ordered locus">PputGB1_4315</name>
</gene>
<proteinExistence type="inferred from homology"/>